<feature type="chain" id="PRO_1000198567" description="tRNA (guanine-N(1)-)-methyltransferase">
    <location>
        <begin position="1"/>
        <end position="242"/>
    </location>
</feature>
<feature type="binding site" evidence="1">
    <location>
        <position position="112"/>
    </location>
    <ligand>
        <name>S-adenosyl-L-methionine</name>
        <dbReference type="ChEBI" id="CHEBI:59789"/>
    </ligand>
</feature>
<feature type="binding site" evidence="1">
    <location>
        <begin position="131"/>
        <end position="136"/>
    </location>
    <ligand>
        <name>S-adenosyl-L-methionine</name>
        <dbReference type="ChEBI" id="CHEBI:59789"/>
    </ligand>
</feature>
<reference key="1">
    <citation type="journal article" date="2008" name="Proc. Natl. Acad. Sci. U.S.A.">
        <title>The genome of Cyanothece 51142, a unicellular diazotrophic cyanobacterium important in the marine nitrogen cycle.</title>
        <authorList>
            <person name="Welsh E.A."/>
            <person name="Liberton M."/>
            <person name="Stoeckel J."/>
            <person name="Loh T."/>
            <person name="Elvitigala T."/>
            <person name="Wang C."/>
            <person name="Wollam A."/>
            <person name="Fulton R.S."/>
            <person name="Clifton S.W."/>
            <person name="Jacobs J.M."/>
            <person name="Aurora R."/>
            <person name="Ghosh B.K."/>
            <person name="Sherman L.A."/>
            <person name="Smith R.D."/>
            <person name="Wilson R.K."/>
            <person name="Pakrasi H.B."/>
        </authorList>
    </citation>
    <scope>NUCLEOTIDE SEQUENCE [LARGE SCALE GENOMIC DNA]</scope>
    <source>
        <strain>ATCC 51142 / BH68</strain>
    </source>
</reference>
<name>TRMD_CROS5</name>
<sequence length="242" mass="27473">MNIDVITLFPDFFTSGLQSGLLGKALANHIATVNLINPRDFALDKHHRVDDIPYGGGVGMVLKPEPIFAAVNSVHRLPSTQVILLTPQGSPLTQTTLQDLSTNYQQLILICGHYEGVDERIRYLADREISLGDFILTCGEIPALALINGVVRLLPGTVGKVESLKAESFEDGLLDYPQYTRPAVFQDWQIPEVLRSGNHQLIAQWRKEQQIQRTQQRRPDLWEKFEERRKQKIEDRKHEQAE</sequence>
<proteinExistence type="inferred from homology"/>
<keyword id="KW-0963">Cytoplasm</keyword>
<keyword id="KW-0489">Methyltransferase</keyword>
<keyword id="KW-1185">Reference proteome</keyword>
<keyword id="KW-0949">S-adenosyl-L-methionine</keyword>
<keyword id="KW-0808">Transferase</keyword>
<keyword id="KW-0819">tRNA processing</keyword>
<evidence type="ECO:0000255" key="1">
    <source>
        <dbReference type="HAMAP-Rule" id="MF_00605"/>
    </source>
</evidence>
<comment type="function">
    <text evidence="1">Specifically methylates guanosine-37 in various tRNAs.</text>
</comment>
<comment type="catalytic activity">
    <reaction evidence="1">
        <text>guanosine(37) in tRNA + S-adenosyl-L-methionine = N(1)-methylguanosine(37) in tRNA + S-adenosyl-L-homocysteine + H(+)</text>
        <dbReference type="Rhea" id="RHEA:36899"/>
        <dbReference type="Rhea" id="RHEA-COMP:10145"/>
        <dbReference type="Rhea" id="RHEA-COMP:10147"/>
        <dbReference type="ChEBI" id="CHEBI:15378"/>
        <dbReference type="ChEBI" id="CHEBI:57856"/>
        <dbReference type="ChEBI" id="CHEBI:59789"/>
        <dbReference type="ChEBI" id="CHEBI:73542"/>
        <dbReference type="ChEBI" id="CHEBI:74269"/>
        <dbReference type="EC" id="2.1.1.228"/>
    </reaction>
</comment>
<comment type="subunit">
    <text evidence="1">Homodimer.</text>
</comment>
<comment type="subcellular location">
    <subcellularLocation>
        <location evidence="1">Cytoplasm</location>
    </subcellularLocation>
</comment>
<comment type="similarity">
    <text evidence="1">Belongs to the RNA methyltransferase TrmD family.</text>
</comment>
<organism>
    <name type="scientific">Crocosphaera subtropica (strain ATCC 51142 / BH68)</name>
    <name type="common">Cyanothece sp. (strain ATCC 51142)</name>
    <dbReference type="NCBI Taxonomy" id="43989"/>
    <lineage>
        <taxon>Bacteria</taxon>
        <taxon>Bacillati</taxon>
        <taxon>Cyanobacteriota</taxon>
        <taxon>Cyanophyceae</taxon>
        <taxon>Oscillatoriophycideae</taxon>
        <taxon>Chroococcales</taxon>
        <taxon>Aphanothecaceae</taxon>
        <taxon>Crocosphaera</taxon>
        <taxon>Crocosphaera subtropica</taxon>
    </lineage>
</organism>
<gene>
    <name evidence="1" type="primary">trmD</name>
    <name type="ordered locus">cce_2235</name>
</gene>
<protein>
    <recommendedName>
        <fullName evidence="1">tRNA (guanine-N(1)-)-methyltransferase</fullName>
        <ecNumber evidence="1">2.1.1.228</ecNumber>
    </recommendedName>
    <alternativeName>
        <fullName evidence="1">M1G-methyltransferase</fullName>
    </alternativeName>
    <alternativeName>
        <fullName evidence="1">tRNA [GM37] methyltransferase</fullName>
    </alternativeName>
</protein>
<accession>B1WPL5</accession>
<dbReference type="EC" id="2.1.1.228" evidence="1"/>
<dbReference type="EMBL" id="CP000806">
    <property type="protein sequence ID" value="ACB51585.1"/>
    <property type="molecule type" value="Genomic_DNA"/>
</dbReference>
<dbReference type="RefSeq" id="WP_009546981.1">
    <property type="nucleotide sequence ID" value="NC_010546.1"/>
</dbReference>
<dbReference type="SMR" id="B1WPL5"/>
<dbReference type="STRING" id="43989.cce_2235"/>
<dbReference type="KEGG" id="cyt:cce_2235"/>
<dbReference type="eggNOG" id="COG0336">
    <property type="taxonomic scope" value="Bacteria"/>
</dbReference>
<dbReference type="HOGENOM" id="CLU_047363_0_1_3"/>
<dbReference type="OrthoDB" id="9807416at2"/>
<dbReference type="Proteomes" id="UP000001203">
    <property type="component" value="Chromosome circular"/>
</dbReference>
<dbReference type="GO" id="GO:0005829">
    <property type="term" value="C:cytosol"/>
    <property type="evidence" value="ECO:0007669"/>
    <property type="project" value="TreeGrafter"/>
</dbReference>
<dbReference type="GO" id="GO:0052906">
    <property type="term" value="F:tRNA (guanine(37)-N1)-methyltransferase activity"/>
    <property type="evidence" value="ECO:0007669"/>
    <property type="project" value="UniProtKB-UniRule"/>
</dbReference>
<dbReference type="GO" id="GO:0002939">
    <property type="term" value="P:tRNA N1-guanine methylation"/>
    <property type="evidence" value="ECO:0007669"/>
    <property type="project" value="TreeGrafter"/>
</dbReference>
<dbReference type="CDD" id="cd18080">
    <property type="entry name" value="TrmD-like"/>
    <property type="match status" value="1"/>
</dbReference>
<dbReference type="FunFam" id="1.10.1270.20:FF:000001">
    <property type="entry name" value="tRNA (guanine-N(1)-)-methyltransferase"/>
    <property type="match status" value="1"/>
</dbReference>
<dbReference type="FunFam" id="3.40.1280.10:FF:000001">
    <property type="entry name" value="tRNA (guanine-N(1)-)-methyltransferase"/>
    <property type="match status" value="1"/>
</dbReference>
<dbReference type="Gene3D" id="3.40.1280.10">
    <property type="match status" value="1"/>
</dbReference>
<dbReference type="Gene3D" id="1.10.1270.20">
    <property type="entry name" value="tRNA(m1g37)methyltransferase, domain 2"/>
    <property type="match status" value="1"/>
</dbReference>
<dbReference type="HAMAP" id="MF_00605">
    <property type="entry name" value="TrmD"/>
    <property type="match status" value="1"/>
</dbReference>
<dbReference type="InterPro" id="IPR029028">
    <property type="entry name" value="Alpha/beta_knot_MTases"/>
</dbReference>
<dbReference type="InterPro" id="IPR023148">
    <property type="entry name" value="tRNA_m1G_MeTrfase_C_sf"/>
</dbReference>
<dbReference type="InterPro" id="IPR002649">
    <property type="entry name" value="tRNA_m1G_MeTrfase_TrmD"/>
</dbReference>
<dbReference type="InterPro" id="IPR029026">
    <property type="entry name" value="tRNA_m1G_MTases_N"/>
</dbReference>
<dbReference type="InterPro" id="IPR016009">
    <property type="entry name" value="tRNA_MeTrfase_TRMD/TRM10"/>
</dbReference>
<dbReference type="NCBIfam" id="NF000648">
    <property type="entry name" value="PRK00026.1"/>
    <property type="match status" value="1"/>
</dbReference>
<dbReference type="NCBIfam" id="TIGR00088">
    <property type="entry name" value="trmD"/>
    <property type="match status" value="1"/>
</dbReference>
<dbReference type="PANTHER" id="PTHR46417">
    <property type="entry name" value="TRNA (GUANINE-N(1)-)-METHYLTRANSFERASE"/>
    <property type="match status" value="1"/>
</dbReference>
<dbReference type="PANTHER" id="PTHR46417:SF1">
    <property type="entry name" value="TRNA (GUANINE-N(1)-)-METHYLTRANSFERASE"/>
    <property type="match status" value="1"/>
</dbReference>
<dbReference type="Pfam" id="PF01746">
    <property type="entry name" value="tRNA_m1G_MT"/>
    <property type="match status" value="1"/>
</dbReference>
<dbReference type="PIRSF" id="PIRSF000386">
    <property type="entry name" value="tRNA_mtase"/>
    <property type="match status" value="1"/>
</dbReference>
<dbReference type="SUPFAM" id="SSF75217">
    <property type="entry name" value="alpha/beta knot"/>
    <property type="match status" value="1"/>
</dbReference>